<name>BGLH_ECOL5</name>
<gene>
    <name type="primary">bglH</name>
    <name type="ordered locus">ECP_3919</name>
</gene>
<proteinExistence type="inferred from homology"/>
<evidence type="ECO:0000255" key="1"/>
<evidence type="ECO:0000305" key="2"/>
<keyword id="KW-0998">Cell outer membrane</keyword>
<keyword id="KW-0406">Ion transport</keyword>
<keyword id="KW-0472">Membrane</keyword>
<keyword id="KW-0626">Porin</keyword>
<keyword id="KW-0732">Signal</keyword>
<keyword id="KW-0812">Transmembrane</keyword>
<keyword id="KW-1134">Transmembrane beta strand</keyword>
<keyword id="KW-0813">Transport</keyword>
<feature type="signal peptide" evidence="1">
    <location>
        <begin position="1"/>
        <end position="25"/>
    </location>
</feature>
<feature type="chain" id="PRO_0000355023" description="Putative outer membrane porin BglH">
    <location>
        <begin position="26"/>
        <end position="538"/>
    </location>
</feature>
<dbReference type="EMBL" id="CP000247">
    <property type="protein sequence ID" value="ABG71890.1"/>
    <property type="molecule type" value="Genomic_DNA"/>
</dbReference>
<dbReference type="RefSeq" id="WP_000489812.1">
    <property type="nucleotide sequence ID" value="NC_008253.1"/>
</dbReference>
<dbReference type="SMR" id="Q0TAY9"/>
<dbReference type="KEGG" id="ecp:ECP_3919"/>
<dbReference type="HOGENOM" id="CLU_032473_2_1_6"/>
<dbReference type="Proteomes" id="UP000009182">
    <property type="component" value="Chromosome"/>
</dbReference>
<dbReference type="GO" id="GO:0009279">
    <property type="term" value="C:cell outer membrane"/>
    <property type="evidence" value="ECO:0007669"/>
    <property type="project" value="UniProtKB-SubCell"/>
</dbReference>
<dbReference type="GO" id="GO:0046930">
    <property type="term" value="C:pore complex"/>
    <property type="evidence" value="ECO:0007669"/>
    <property type="project" value="UniProtKB-KW"/>
</dbReference>
<dbReference type="GO" id="GO:0015144">
    <property type="term" value="F:carbohydrate transmembrane transporter activity"/>
    <property type="evidence" value="ECO:0007669"/>
    <property type="project" value="TreeGrafter"/>
</dbReference>
<dbReference type="GO" id="GO:0015288">
    <property type="term" value="F:porin activity"/>
    <property type="evidence" value="ECO:0007669"/>
    <property type="project" value="UniProtKB-KW"/>
</dbReference>
<dbReference type="GO" id="GO:0006811">
    <property type="term" value="P:monoatomic ion transport"/>
    <property type="evidence" value="ECO:0007669"/>
    <property type="project" value="UniProtKB-KW"/>
</dbReference>
<dbReference type="GO" id="GO:0015774">
    <property type="term" value="P:polysaccharide transport"/>
    <property type="evidence" value="ECO:0007669"/>
    <property type="project" value="TreeGrafter"/>
</dbReference>
<dbReference type="CDD" id="cd01346">
    <property type="entry name" value="Maltoporin-like"/>
    <property type="match status" value="1"/>
</dbReference>
<dbReference type="FunFam" id="2.40.170.10:FF:000002">
    <property type="entry name" value="Cryptic outer membrane porin BglH"/>
    <property type="match status" value="1"/>
</dbReference>
<dbReference type="Gene3D" id="2.40.170.10">
    <property type="entry name" value="Porin, LamB type"/>
    <property type="match status" value="1"/>
</dbReference>
<dbReference type="InterPro" id="IPR050286">
    <property type="entry name" value="G_neg_Bact_CarbUptk_Porin"/>
</dbReference>
<dbReference type="InterPro" id="IPR021570">
    <property type="entry name" value="LamB-type_porin_N_dom"/>
</dbReference>
<dbReference type="InterPro" id="IPR003192">
    <property type="entry name" value="Porin_LamB"/>
</dbReference>
<dbReference type="InterPro" id="IPR036998">
    <property type="entry name" value="Porin_LamB_sf"/>
</dbReference>
<dbReference type="PANTHER" id="PTHR38762">
    <property type="entry name" value="CRYPTIC OUTER MEMBRANE PORIN BGLH-RELATED"/>
    <property type="match status" value="1"/>
</dbReference>
<dbReference type="PANTHER" id="PTHR38762:SF1">
    <property type="entry name" value="CRYPTIC OUTER MEMBRANE PORIN BGLH-RELATED"/>
    <property type="match status" value="1"/>
</dbReference>
<dbReference type="Pfam" id="PF02264">
    <property type="entry name" value="LamB"/>
    <property type="match status" value="1"/>
</dbReference>
<dbReference type="Pfam" id="PF11471">
    <property type="entry name" value="Sugarporin_N"/>
    <property type="match status" value="1"/>
</dbReference>
<dbReference type="SUPFAM" id="SSF56935">
    <property type="entry name" value="Porins"/>
    <property type="match status" value="1"/>
</dbReference>
<reference key="1">
    <citation type="journal article" date="2006" name="Mol. Microbiol.">
        <title>Role of pathogenicity island-associated integrases in the genome plasticity of uropathogenic Escherichia coli strain 536.</title>
        <authorList>
            <person name="Hochhut B."/>
            <person name="Wilde C."/>
            <person name="Balling G."/>
            <person name="Middendorf B."/>
            <person name="Dobrindt U."/>
            <person name="Brzuszkiewicz E."/>
            <person name="Gottschalk G."/>
            <person name="Carniel E."/>
            <person name="Hacker J."/>
        </authorList>
    </citation>
    <scope>NUCLEOTIDE SEQUENCE [LARGE SCALE GENOMIC DNA]</scope>
    <source>
        <strain>536 / UPEC</strain>
    </source>
</reference>
<organism>
    <name type="scientific">Escherichia coli O6:K15:H31 (strain 536 / UPEC)</name>
    <dbReference type="NCBI Taxonomy" id="362663"/>
    <lineage>
        <taxon>Bacteria</taxon>
        <taxon>Pseudomonadati</taxon>
        <taxon>Pseudomonadota</taxon>
        <taxon>Gammaproteobacteria</taxon>
        <taxon>Enterobacterales</taxon>
        <taxon>Enterobacteriaceae</taxon>
        <taxon>Escherichia</taxon>
    </lineage>
</organism>
<accession>Q0TAY9</accession>
<protein>
    <recommendedName>
        <fullName>Putative outer membrane porin BglH</fullName>
    </recommendedName>
</protein>
<comment type="function">
    <text evidence="2">May be a sugar porin with a broad carbohydrate specificity.</text>
</comment>
<comment type="subcellular location">
    <subcellularLocation>
        <location evidence="2">Cell outer membrane</location>
        <topology evidence="2">Multi-pass membrane protein</topology>
    </subcellularLocation>
</comment>
<comment type="similarity">
    <text evidence="2">Belongs to the porin LamB (TC 1.B.3) family.</text>
</comment>
<sequence length="538" mass="60737">MFRRNIITSAILLMAPLAFSAQSLAESLTVEQRLELLEKALRETQSELKKYKDEEKKKYTPATVNRSVSTNDQGYAANPFPTSHAAKPDAVLVKNEEKNASETGSIYSSMTLKDFSKFVKDEIGFSYNGYYRSGWGTASHGSPKSWAIGSLGRFGNEYSGWFDLQLKQRVYNENGKRVDAIVMMDGNVGQQYSTGWFGDNAGGENFMQFSDMYVTTKGFLPFAPEADFWVGKHGAPKIEIQMLDWKTQRTDAAAGVGLENWKVGPGKIDIALVREDVDDYDRSLQNKQQINTNTIDLRYKDIPLWDKATLMVSGRYVSANESASEKDNQDNNGYYDWKDTWMFGTSLTQKFDKGGFNEFSFLVANNSIASNFGRYAGASPFTTFNGRYYGDHTGGTAVRLTSQGEAYIGDHFIVANAIVYSFGNDIYSYETGAHSDFESIRAVVRPAYIWDQYNQTGVELGYFTQQNKDANSNKYNESGYKTTLFHTFKVNTSMLTSRPEIRFYTTYIKALENELDGFTFEDNKDDQFAVGAQAEIWW</sequence>